<organism>
    <name type="scientific">Prochlorococcus marinus (strain NATL2A)</name>
    <dbReference type="NCBI Taxonomy" id="59920"/>
    <lineage>
        <taxon>Bacteria</taxon>
        <taxon>Bacillati</taxon>
        <taxon>Cyanobacteriota</taxon>
        <taxon>Cyanophyceae</taxon>
        <taxon>Synechococcales</taxon>
        <taxon>Prochlorococcaceae</taxon>
        <taxon>Prochlorococcus</taxon>
    </lineage>
</organism>
<reference key="1">
    <citation type="journal article" date="2007" name="PLoS Genet.">
        <title>Patterns and implications of gene gain and loss in the evolution of Prochlorococcus.</title>
        <authorList>
            <person name="Kettler G.C."/>
            <person name="Martiny A.C."/>
            <person name="Huang K."/>
            <person name="Zucker J."/>
            <person name="Coleman M.L."/>
            <person name="Rodrigue S."/>
            <person name="Chen F."/>
            <person name="Lapidus A."/>
            <person name="Ferriera S."/>
            <person name="Johnson J."/>
            <person name="Steglich C."/>
            <person name="Church G.M."/>
            <person name="Richardson P."/>
            <person name="Chisholm S.W."/>
        </authorList>
    </citation>
    <scope>NUCLEOTIDE SEQUENCE [LARGE SCALE GENOMIC DNA]</scope>
    <source>
        <strain>NATL2A</strain>
    </source>
</reference>
<comment type="similarity">
    <text evidence="1">Belongs to the SfsA family.</text>
</comment>
<name>SFSA_PROMT</name>
<keyword id="KW-1185">Reference proteome</keyword>
<sequence>MIEIGETIIKFPPLKEGILIKRYKRFLADIELDDGEVVTAHCANTGPMKGVLWPGRRVRLKYSPSPKRKLDWSWEQAEVPSHNENKKCWVGINTSLPNKLIKHLIEANCLERQFGQISSIKPEVVYGLERKSRIDLLLYPSIQNEDSRKIFVEVKNTTWCEDSLALFPDTVTTRGQKHLKELMSVYPDSRAVLIPCISRSDIELFAPGEIADPEYGRLFREALTKGVEVIPCAFGFFIDHITWEGIRPFQKSRENKQF</sequence>
<dbReference type="EMBL" id="CP000095">
    <property type="protein sequence ID" value="AAZ59116.1"/>
    <property type="molecule type" value="Genomic_DNA"/>
</dbReference>
<dbReference type="RefSeq" id="WP_011294261.1">
    <property type="nucleotide sequence ID" value="NC_007335.2"/>
</dbReference>
<dbReference type="SMR" id="Q46HB2"/>
<dbReference type="STRING" id="59920.PMN2A_1628"/>
<dbReference type="KEGG" id="pmn:PMN2A_1628"/>
<dbReference type="HOGENOM" id="CLU_052299_2_0_3"/>
<dbReference type="OrthoDB" id="9802365at2"/>
<dbReference type="PhylomeDB" id="Q46HB2"/>
<dbReference type="Proteomes" id="UP000002535">
    <property type="component" value="Chromosome"/>
</dbReference>
<dbReference type="GO" id="GO:0003677">
    <property type="term" value="F:DNA binding"/>
    <property type="evidence" value="ECO:0007669"/>
    <property type="project" value="InterPro"/>
</dbReference>
<dbReference type="CDD" id="cd22359">
    <property type="entry name" value="SfsA-like_bacterial"/>
    <property type="match status" value="1"/>
</dbReference>
<dbReference type="Gene3D" id="2.40.50.580">
    <property type="match status" value="1"/>
</dbReference>
<dbReference type="Gene3D" id="3.40.1350.60">
    <property type="match status" value="1"/>
</dbReference>
<dbReference type="HAMAP" id="MF_00095">
    <property type="entry name" value="SfsA"/>
    <property type="match status" value="1"/>
</dbReference>
<dbReference type="InterPro" id="IPR005224">
    <property type="entry name" value="SfsA"/>
</dbReference>
<dbReference type="InterPro" id="IPR040452">
    <property type="entry name" value="SfsA_C"/>
</dbReference>
<dbReference type="InterPro" id="IPR041465">
    <property type="entry name" value="SfsA_N"/>
</dbReference>
<dbReference type="NCBIfam" id="TIGR00230">
    <property type="entry name" value="sfsA"/>
    <property type="match status" value="1"/>
</dbReference>
<dbReference type="PANTHER" id="PTHR30545">
    <property type="entry name" value="SUGAR FERMENTATION STIMULATION PROTEIN A"/>
    <property type="match status" value="1"/>
</dbReference>
<dbReference type="PANTHER" id="PTHR30545:SF2">
    <property type="entry name" value="SUGAR FERMENTATION STIMULATION PROTEIN A"/>
    <property type="match status" value="1"/>
</dbReference>
<dbReference type="Pfam" id="PF03749">
    <property type="entry name" value="SfsA"/>
    <property type="match status" value="1"/>
</dbReference>
<dbReference type="Pfam" id="PF17746">
    <property type="entry name" value="SfsA_N"/>
    <property type="match status" value="1"/>
</dbReference>
<evidence type="ECO:0000255" key="1">
    <source>
        <dbReference type="HAMAP-Rule" id="MF_00095"/>
    </source>
</evidence>
<accession>Q46HB2</accession>
<protein>
    <recommendedName>
        <fullName evidence="1">Sugar fermentation stimulation protein homolog</fullName>
    </recommendedName>
</protein>
<gene>
    <name evidence="1" type="primary">sfsA</name>
    <name type="ordered locus">PMN2A_1628</name>
</gene>
<proteinExistence type="inferred from homology"/>
<feature type="chain" id="PRO_0000340150" description="Sugar fermentation stimulation protein homolog">
    <location>
        <begin position="1"/>
        <end position="258"/>
    </location>
</feature>